<protein>
    <recommendedName>
        <fullName>Serine acetyltransferase</fullName>
        <shortName>SAT</shortName>
        <ecNumber>2.3.1.30</ecNumber>
    </recommendedName>
</protein>
<evidence type="ECO:0000250" key="1"/>
<evidence type="ECO:0000269" key="2">
    <source>
    </source>
</evidence>
<evidence type="ECO:0000305" key="3"/>
<name>CYSE_BACSU</name>
<reference key="1">
    <citation type="journal article" date="1994" name="J. Biol. Chem.">
        <title>Clustering and co-transcription of the Bacillus subtilis genes encoding the aminoacyl-tRNA synthetases specific for glutamate and for cysteine and the first enzyme for cysteine biosynthesis.</title>
        <authorList>
            <person name="Gagnon Y."/>
            <person name="Breton R."/>
            <person name="Putzer H."/>
            <person name="Pelchat M."/>
            <person name="Grunberg-Manago M."/>
            <person name="Lapointe J."/>
        </authorList>
    </citation>
    <scope>NUCLEOTIDE SEQUENCE [GENOMIC DNA]</scope>
</reference>
<reference key="2">
    <citation type="journal article" date="1994" name="DNA Res.">
        <title>Systematic sequencing of the 180 kilobase region of the Bacillus subtilis chromosome containing the replication origin.</title>
        <authorList>
            <person name="Ogasawara N."/>
            <person name="Nakai S."/>
            <person name="Yoshikawa H."/>
        </authorList>
    </citation>
    <scope>NUCLEOTIDE SEQUENCE [GENOMIC DNA]</scope>
    <source>
        <strain>168</strain>
    </source>
</reference>
<reference key="3">
    <citation type="journal article" date="1997" name="Nature">
        <title>The complete genome sequence of the Gram-positive bacterium Bacillus subtilis.</title>
        <authorList>
            <person name="Kunst F."/>
            <person name="Ogasawara N."/>
            <person name="Moszer I."/>
            <person name="Albertini A.M."/>
            <person name="Alloni G."/>
            <person name="Azevedo V."/>
            <person name="Bertero M.G."/>
            <person name="Bessieres P."/>
            <person name="Bolotin A."/>
            <person name="Borchert S."/>
            <person name="Borriss R."/>
            <person name="Boursier L."/>
            <person name="Brans A."/>
            <person name="Braun M."/>
            <person name="Brignell S.C."/>
            <person name="Bron S."/>
            <person name="Brouillet S."/>
            <person name="Bruschi C.V."/>
            <person name="Caldwell B."/>
            <person name="Capuano V."/>
            <person name="Carter N.M."/>
            <person name="Choi S.-K."/>
            <person name="Codani J.-J."/>
            <person name="Connerton I.F."/>
            <person name="Cummings N.J."/>
            <person name="Daniel R.A."/>
            <person name="Denizot F."/>
            <person name="Devine K.M."/>
            <person name="Duesterhoeft A."/>
            <person name="Ehrlich S.D."/>
            <person name="Emmerson P.T."/>
            <person name="Entian K.-D."/>
            <person name="Errington J."/>
            <person name="Fabret C."/>
            <person name="Ferrari E."/>
            <person name="Foulger D."/>
            <person name="Fritz C."/>
            <person name="Fujita M."/>
            <person name="Fujita Y."/>
            <person name="Fuma S."/>
            <person name="Galizzi A."/>
            <person name="Galleron N."/>
            <person name="Ghim S.-Y."/>
            <person name="Glaser P."/>
            <person name="Goffeau A."/>
            <person name="Golightly E.J."/>
            <person name="Grandi G."/>
            <person name="Guiseppi G."/>
            <person name="Guy B.J."/>
            <person name="Haga K."/>
            <person name="Haiech J."/>
            <person name="Harwood C.R."/>
            <person name="Henaut A."/>
            <person name="Hilbert H."/>
            <person name="Holsappel S."/>
            <person name="Hosono S."/>
            <person name="Hullo M.-F."/>
            <person name="Itaya M."/>
            <person name="Jones L.-M."/>
            <person name="Joris B."/>
            <person name="Karamata D."/>
            <person name="Kasahara Y."/>
            <person name="Klaerr-Blanchard M."/>
            <person name="Klein C."/>
            <person name="Kobayashi Y."/>
            <person name="Koetter P."/>
            <person name="Koningstein G."/>
            <person name="Krogh S."/>
            <person name="Kumano M."/>
            <person name="Kurita K."/>
            <person name="Lapidus A."/>
            <person name="Lardinois S."/>
            <person name="Lauber J."/>
            <person name="Lazarevic V."/>
            <person name="Lee S.-M."/>
            <person name="Levine A."/>
            <person name="Liu H."/>
            <person name="Masuda S."/>
            <person name="Mauel C."/>
            <person name="Medigue C."/>
            <person name="Medina N."/>
            <person name="Mellado R.P."/>
            <person name="Mizuno M."/>
            <person name="Moestl D."/>
            <person name="Nakai S."/>
            <person name="Noback M."/>
            <person name="Noone D."/>
            <person name="O'Reilly M."/>
            <person name="Ogawa K."/>
            <person name="Ogiwara A."/>
            <person name="Oudega B."/>
            <person name="Park S.-H."/>
            <person name="Parro V."/>
            <person name="Pohl T.M."/>
            <person name="Portetelle D."/>
            <person name="Porwollik S."/>
            <person name="Prescott A.M."/>
            <person name="Presecan E."/>
            <person name="Pujic P."/>
            <person name="Purnelle B."/>
            <person name="Rapoport G."/>
            <person name="Rey M."/>
            <person name="Reynolds S."/>
            <person name="Rieger M."/>
            <person name="Rivolta C."/>
            <person name="Rocha E."/>
            <person name="Roche B."/>
            <person name="Rose M."/>
            <person name="Sadaie Y."/>
            <person name="Sato T."/>
            <person name="Scanlan E."/>
            <person name="Schleich S."/>
            <person name="Schroeter R."/>
            <person name="Scoffone F."/>
            <person name="Sekiguchi J."/>
            <person name="Sekowska A."/>
            <person name="Seror S.J."/>
            <person name="Serror P."/>
            <person name="Shin B.-S."/>
            <person name="Soldo B."/>
            <person name="Sorokin A."/>
            <person name="Tacconi E."/>
            <person name="Takagi T."/>
            <person name="Takahashi H."/>
            <person name="Takemaru K."/>
            <person name="Takeuchi M."/>
            <person name="Tamakoshi A."/>
            <person name="Tanaka T."/>
            <person name="Terpstra P."/>
            <person name="Tognoni A."/>
            <person name="Tosato V."/>
            <person name="Uchiyama S."/>
            <person name="Vandenbol M."/>
            <person name="Vannier F."/>
            <person name="Vassarotti A."/>
            <person name="Viari A."/>
            <person name="Wambutt R."/>
            <person name="Wedler E."/>
            <person name="Wedler H."/>
            <person name="Weitzenegger T."/>
            <person name="Winters P."/>
            <person name="Wipat A."/>
            <person name="Yamamoto H."/>
            <person name="Yamane K."/>
            <person name="Yasumoto K."/>
            <person name="Yata K."/>
            <person name="Yoshida K."/>
            <person name="Yoshikawa H.-F."/>
            <person name="Zumstein E."/>
            <person name="Yoshikawa H."/>
            <person name="Danchin A."/>
        </authorList>
    </citation>
    <scope>NUCLEOTIDE SEQUENCE [LARGE SCALE GENOMIC DNA]</scope>
    <source>
        <strain>168</strain>
    </source>
</reference>
<reference key="4">
    <citation type="journal article" date="2008" name="J. Biol. Chem.">
        <title>The CymR regulator in complex with the enzyme CysK controls cysteine metabolism in Bacillus subtilis.</title>
        <authorList>
            <person name="Tanous C."/>
            <person name="Soutourina O."/>
            <person name="Raynal B."/>
            <person name="Hullo M.-F."/>
            <person name="Mervelet P."/>
            <person name="Gilles A.-M."/>
            <person name="Noirot P."/>
            <person name="Danchin A."/>
            <person name="England P."/>
            <person name="Martin-Verstraete I."/>
        </authorList>
    </citation>
    <scope>CATALYTIC ACTIVITY</scope>
    <scope>ACTIVITY REGULATION</scope>
    <source>
        <strain>168</strain>
    </source>
</reference>
<comment type="function">
    <text>Catalyzes the acetylation of serine by acetyl-CoA to produce O-acetylserine (OAS).</text>
</comment>
<comment type="catalytic activity">
    <reaction evidence="2">
        <text>L-serine + acetyl-CoA = O-acetyl-L-serine + CoA</text>
        <dbReference type="Rhea" id="RHEA:24560"/>
        <dbReference type="ChEBI" id="CHEBI:33384"/>
        <dbReference type="ChEBI" id="CHEBI:57287"/>
        <dbReference type="ChEBI" id="CHEBI:57288"/>
        <dbReference type="ChEBI" id="CHEBI:58340"/>
        <dbReference type="EC" id="2.3.1.30"/>
    </reaction>
</comment>
<comment type="activity regulation">
    <text evidence="2">Inhibited by cysteine.</text>
</comment>
<comment type="pathway">
    <text>Amino-acid biosynthesis; L-cysteine biosynthesis; L-cysteine from L-serine: step 1/2.</text>
</comment>
<comment type="subcellular location">
    <subcellularLocation>
        <location evidence="1">Cytoplasm</location>
    </subcellularLocation>
</comment>
<comment type="similarity">
    <text evidence="3">Belongs to the transferase hexapeptide repeat family.</text>
</comment>
<feature type="chain" id="PRO_0000068665" description="Serine acetyltransferase">
    <location>
        <begin position="1"/>
        <end position="217"/>
    </location>
</feature>
<accession>Q06750</accession>
<sequence length="217" mass="24143">MFFRMLKEDIDTVFDQDPAARSYFEVILTYSGLHAIWAHRIAHALYKRKFYFLARLISQVSRFFTGIEIHPGATIGRRFFIDHGMGVVIGETCEIGNNVTVFQGVTLGGTGKEKGKRHPTIKDDALIATGAKVLGSITVGEGSKIGAGSVVLHDVPDFSTVVGIPGRVVVQNGKKVRRDLNHQDLPDPVADRFKSLEQQILELKAELEDRKERINQK</sequence>
<proteinExistence type="evidence at protein level"/>
<dbReference type="EC" id="2.3.1.30"/>
<dbReference type="EMBL" id="L14580">
    <property type="protein sequence ID" value="AAA21797.1"/>
    <property type="molecule type" value="Genomic_DNA"/>
</dbReference>
<dbReference type="EMBL" id="D26185">
    <property type="protein sequence ID" value="BAA05327.1"/>
    <property type="molecule type" value="Genomic_DNA"/>
</dbReference>
<dbReference type="EMBL" id="AL009126">
    <property type="protein sequence ID" value="CAB11869.1"/>
    <property type="molecule type" value="Genomic_DNA"/>
</dbReference>
<dbReference type="PIR" id="B53402">
    <property type="entry name" value="B53402"/>
</dbReference>
<dbReference type="RefSeq" id="NP_387974.1">
    <property type="nucleotide sequence ID" value="NC_000964.3"/>
</dbReference>
<dbReference type="RefSeq" id="WP_003225749.1">
    <property type="nucleotide sequence ID" value="NZ_OZ025638.1"/>
</dbReference>
<dbReference type="SMR" id="Q06750"/>
<dbReference type="FunCoup" id="Q06750">
    <property type="interactions" value="354"/>
</dbReference>
<dbReference type="STRING" id="224308.BSU00930"/>
<dbReference type="PaxDb" id="224308-BSU00930"/>
<dbReference type="EnsemblBacteria" id="CAB11869">
    <property type="protein sequence ID" value="CAB11869"/>
    <property type="gene ID" value="BSU_00930"/>
</dbReference>
<dbReference type="GeneID" id="86875509"/>
<dbReference type="GeneID" id="936831"/>
<dbReference type="KEGG" id="bsu:BSU00930"/>
<dbReference type="PATRIC" id="fig|224308.179.peg.96"/>
<dbReference type="eggNOG" id="COG1045">
    <property type="taxonomic scope" value="Bacteria"/>
</dbReference>
<dbReference type="InParanoid" id="Q06750"/>
<dbReference type="OrthoDB" id="9801456at2"/>
<dbReference type="PhylomeDB" id="Q06750"/>
<dbReference type="BioCyc" id="BSUB:BSU00930-MONOMER"/>
<dbReference type="UniPathway" id="UPA00136">
    <property type="reaction ID" value="UER00199"/>
</dbReference>
<dbReference type="Proteomes" id="UP000001570">
    <property type="component" value="Chromosome"/>
</dbReference>
<dbReference type="GO" id="GO:0005829">
    <property type="term" value="C:cytosol"/>
    <property type="evidence" value="ECO:0000318"/>
    <property type="project" value="GO_Central"/>
</dbReference>
<dbReference type="GO" id="GO:0009001">
    <property type="term" value="F:serine O-acetyltransferase activity"/>
    <property type="evidence" value="ECO:0000314"/>
    <property type="project" value="CAFA"/>
</dbReference>
<dbReference type="GO" id="GO:0019344">
    <property type="term" value="P:cysteine biosynthetic process"/>
    <property type="evidence" value="ECO:0000315"/>
    <property type="project" value="CAFA"/>
</dbReference>
<dbReference type="GO" id="GO:0006535">
    <property type="term" value="P:cysteine biosynthetic process from serine"/>
    <property type="evidence" value="ECO:0007669"/>
    <property type="project" value="InterPro"/>
</dbReference>
<dbReference type="GO" id="GO:0009087">
    <property type="term" value="P:methionine catabolic process"/>
    <property type="evidence" value="ECO:0000315"/>
    <property type="project" value="CAFA"/>
</dbReference>
<dbReference type="CDD" id="cd03354">
    <property type="entry name" value="LbH_SAT"/>
    <property type="match status" value="1"/>
</dbReference>
<dbReference type="FunFam" id="1.10.3130.10:FF:000002">
    <property type="entry name" value="Serine acetyltransferase"/>
    <property type="match status" value="1"/>
</dbReference>
<dbReference type="FunFam" id="2.160.10.10:FF:000007">
    <property type="entry name" value="Serine acetyltransferase"/>
    <property type="match status" value="1"/>
</dbReference>
<dbReference type="Gene3D" id="2.160.10.10">
    <property type="entry name" value="Hexapeptide repeat proteins"/>
    <property type="match status" value="1"/>
</dbReference>
<dbReference type="Gene3D" id="1.10.3130.10">
    <property type="entry name" value="serine acetyltransferase, domain 1"/>
    <property type="match status" value="1"/>
</dbReference>
<dbReference type="InterPro" id="IPR001451">
    <property type="entry name" value="Hexapep"/>
</dbReference>
<dbReference type="InterPro" id="IPR018357">
    <property type="entry name" value="Hexapep_transf_CS"/>
</dbReference>
<dbReference type="InterPro" id="IPR045304">
    <property type="entry name" value="LbH_SAT"/>
</dbReference>
<dbReference type="InterPro" id="IPR042122">
    <property type="entry name" value="Ser_AcTrfase_N_sf"/>
</dbReference>
<dbReference type="InterPro" id="IPR005881">
    <property type="entry name" value="Ser_O-AcTrfase"/>
</dbReference>
<dbReference type="InterPro" id="IPR053376">
    <property type="entry name" value="Serine_acetyltransferase"/>
</dbReference>
<dbReference type="InterPro" id="IPR011004">
    <property type="entry name" value="Trimer_LpxA-like_sf"/>
</dbReference>
<dbReference type="NCBIfam" id="TIGR01172">
    <property type="entry name" value="cysE"/>
    <property type="match status" value="1"/>
</dbReference>
<dbReference type="NCBIfam" id="NF041874">
    <property type="entry name" value="EPS_EpsC"/>
    <property type="match status" value="1"/>
</dbReference>
<dbReference type="PANTHER" id="PTHR42811">
    <property type="entry name" value="SERINE ACETYLTRANSFERASE"/>
    <property type="match status" value="1"/>
</dbReference>
<dbReference type="Pfam" id="PF00132">
    <property type="entry name" value="Hexapep"/>
    <property type="match status" value="1"/>
</dbReference>
<dbReference type="PIRSF" id="PIRSF000441">
    <property type="entry name" value="CysE"/>
    <property type="match status" value="1"/>
</dbReference>
<dbReference type="SUPFAM" id="SSF51161">
    <property type="entry name" value="Trimeric LpxA-like enzymes"/>
    <property type="match status" value="1"/>
</dbReference>
<dbReference type="PROSITE" id="PS00101">
    <property type="entry name" value="HEXAPEP_TRANSFERASES"/>
    <property type="match status" value="1"/>
</dbReference>
<gene>
    <name type="primary">cysE</name>
    <name type="synonym">cysA</name>
    <name type="ordered locus">BSU00930</name>
</gene>
<organism>
    <name type="scientific">Bacillus subtilis (strain 168)</name>
    <dbReference type="NCBI Taxonomy" id="224308"/>
    <lineage>
        <taxon>Bacteria</taxon>
        <taxon>Bacillati</taxon>
        <taxon>Bacillota</taxon>
        <taxon>Bacilli</taxon>
        <taxon>Bacillales</taxon>
        <taxon>Bacillaceae</taxon>
        <taxon>Bacillus</taxon>
    </lineage>
</organism>
<keyword id="KW-0012">Acyltransferase</keyword>
<keyword id="KW-0028">Amino-acid biosynthesis</keyword>
<keyword id="KW-0198">Cysteine biosynthesis</keyword>
<keyword id="KW-0963">Cytoplasm</keyword>
<keyword id="KW-1185">Reference proteome</keyword>
<keyword id="KW-0677">Repeat</keyword>
<keyword id="KW-0808">Transferase</keyword>